<dbReference type="SMR" id="P0DKH7"/>
<dbReference type="Allergome" id="12014">
    <property type="allergen name" value="Fag e 4"/>
</dbReference>
<dbReference type="Allergome" id="12015">
    <property type="allergen name" value="Fag e 4.0101"/>
</dbReference>
<dbReference type="GO" id="GO:0008061">
    <property type="term" value="F:chitin binding"/>
    <property type="evidence" value="ECO:0007669"/>
    <property type="project" value="UniProtKB-KW"/>
</dbReference>
<dbReference type="GO" id="GO:0042742">
    <property type="term" value="P:defense response to bacterium"/>
    <property type="evidence" value="ECO:0007669"/>
    <property type="project" value="UniProtKB-KW"/>
</dbReference>
<dbReference type="GO" id="GO:0050832">
    <property type="term" value="P:defense response to fungus"/>
    <property type="evidence" value="ECO:0007669"/>
    <property type="project" value="UniProtKB-KW"/>
</dbReference>
<dbReference type="GO" id="GO:0031640">
    <property type="term" value="P:killing of cells of another organism"/>
    <property type="evidence" value="ECO:0007669"/>
    <property type="project" value="UniProtKB-KW"/>
</dbReference>
<dbReference type="CDD" id="cd06921">
    <property type="entry name" value="ChtBD1_GH19_hevein"/>
    <property type="match status" value="1"/>
</dbReference>
<dbReference type="FunFam" id="3.30.60.10:FF:000001">
    <property type="entry name" value="Basic endochitinase"/>
    <property type="match status" value="1"/>
</dbReference>
<dbReference type="Gene3D" id="3.30.60.10">
    <property type="entry name" value="Endochitinase-like"/>
    <property type="match status" value="1"/>
</dbReference>
<dbReference type="InterPro" id="IPR001002">
    <property type="entry name" value="Chitin-bd_1"/>
</dbReference>
<dbReference type="InterPro" id="IPR018371">
    <property type="entry name" value="Chitin-binding_1_CS"/>
</dbReference>
<dbReference type="InterPro" id="IPR036861">
    <property type="entry name" value="Endochitinase-like_sf"/>
</dbReference>
<dbReference type="Pfam" id="PF00187">
    <property type="entry name" value="Chitin_bind_1"/>
    <property type="match status" value="1"/>
</dbReference>
<dbReference type="PRINTS" id="PR00451">
    <property type="entry name" value="CHITINBINDNG"/>
</dbReference>
<dbReference type="SMART" id="SM00270">
    <property type="entry name" value="ChtBD1"/>
    <property type="match status" value="1"/>
</dbReference>
<dbReference type="SUPFAM" id="SSF57016">
    <property type="entry name" value="Plant lectins/antimicrobial peptides"/>
    <property type="match status" value="1"/>
</dbReference>
<dbReference type="PROSITE" id="PS00026">
    <property type="entry name" value="CHIT_BIND_I_1"/>
    <property type="match status" value="1"/>
</dbReference>
<dbReference type="PROSITE" id="PS50941">
    <property type="entry name" value="CHIT_BIND_I_2"/>
    <property type="match status" value="1"/>
</dbReference>
<accession>P0DKH7</accession>
<name>AMP1_FAGES</name>
<proteinExistence type="evidence at protein level"/>
<organism>
    <name type="scientific">Fagopyrum esculentum</name>
    <name type="common">Common buckwheat</name>
    <name type="synonym">Polygonum fagopyrum</name>
    <dbReference type="NCBI Taxonomy" id="3617"/>
    <lineage>
        <taxon>Eukaryota</taxon>
        <taxon>Viridiplantae</taxon>
        <taxon>Streptophyta</taxon>
        <taxon>Embryophyta</taxon>
        <taxon>Tracheophyta</taxon>
        <taxon>Spermatophyta</taxon>
        <taxon>Magnoliopsida</taxon>
        <taxon>eudicotyledons</taxon>
        <taxon>Gunneridae</taxon>
        <taxon>Pentapetalae</taxon>
        <taxon>Caryophyllales</taxon>
        <taxon>Polygonaceae</taxon>
        <taxon>Polygonoideae</taxon>
        <taxon>Fagopyreae</taxon>
        <taxon>Fagopyrum</taxon>
    </lineage>
</organism>
<reference key="1">
    <citation type="journal article" date="2003" name="Biosci. Biotechnol. Biochem.">
        <title>Purification, characterization, and sequencing of a novel type of antimicrobial peptides, Fa-AMP1 and Fa-AMP2, from seeds of buckwheat (Fagopyrum esculentum Moench.).</title>
        <authorList>
            <person name="Fujimura M."/>
            <person name="Minami Y."/>
            <person name="Watanabe K."/>
            <person name="Tadera K."/>
        </authorList>
    </citation>
    <scope>PROTEIN SEQUENCE</scope>
    <scope>FUNCTION</scope>
    <scope>IDENTIFICATION BY MASS SPECTROMETRY</scope>
    <scope>LACK OF GLYCOSYLATION</scope>
    <source>
        <tissue>Seed</tissue>
    </source>
</reference>
<comment type="function">
    <text evidence="2">Antimicrobial peptide active against plant pathogenic fungi and Gram-negative and -positive bacteria.</text>
</comment>
<comment type="PTM">
    <text evidence="2">Not glycosylated.</text>
</comment>
<comment type="mass spectrometry" mass="3879.1" method="MALDI" evidence="2"/>
<feature type="chain" id="PRO_0000431410" description="Antimicrobial peptide 1">
    <location>
        <begin position="1"/>
        <end position="40"/>
    </location>
</feature>
<feature type="domain" description="Chitin-binding type-1" evidence="1">
    <location>
        <begin position="1"/>
        <end position="40"/>
    </location>
</feature>
<feature type="disulfide bond" evidence="1">
    <location>
        <begin position="3"/>
        <end position="18"/>
    </location>
</feature>
<feature type="disulfide bond" evidence="1">
    <location>
        <begin position="12"/>
        <end position="24"/>
    </location>
</feature>
<feature type="disulfide bond" evidence="1">
    <location>
        <begin position="17"/>
        <end position="31"/>
    </location>
</feature>
<feature type="disulfide bond" evidence="1">
    <location>
        <begin position="35"/>
        <end position="39"/>
    </location>
</feature>
<keyword id="KW-0044">Antibiotic</keyword>
<keyword id="KW-0929">Antimicrobial</keyword>
<keyword id="KW-0147">Chitin-binding</keyword>
<keyword id="KW-0903">Direct protein sequencing</keyword>
<keyword id="KW-1015">Disulfide bond</keyword>
<keyword id="KW-0295">Fungicide</keyword>
<keyword id="KW-0611">Plant defense</keyword>
<protein>
    <recommendedName>
        <fullName>Antimicrobial peptide 1</fullName>
        <shortName>Fa-AMP1</shortName>
    </recommendedName>
</protein>
<sequence length="40" mass="3887">AQCGAQGGGATCPGGLCCSQWGWCGSTPKYCGAGCQSNCK</sequence>
<evidence type="ECO:0000255" key="1">
    <source>
        <dbReference type="PROSITE-ProRule" id="PRU00261"/>
    </source>
</evidence>
<evidence type="ECO:0000269" key="2">
    <source>
    </source>
</evidence>